<protein>
    <recommendedName>
        <fullName evidence="1">Pentafunctional AROM polypeptide</fullName>
    </recommendedName>
    <domain>
        <recommendedName>
            <fullName evidence="1">3-dehydroquinate synthase</fullName>
            <shortName evidence="1">DHQS</shortName>
            <ecNumber evidence="1">4.2.3.4</ecNumber>
        </recommendedName>
    </domain>
    <domain>
        <recommendedName>
            <fullName evidence="1">3-phosphoshikimate 1-carboxyvinyltransferase</fullName>
            <ecNumber evidence="1">2.5.1.19</ecNumber>
        </recommendedName>
        <alternativeName>
            <fullName evidence="1">5-enolpyruvylshikimate-3-phosphate synthase</fullName>
            <shortName evidence="1">EPSP synthase</shortName>
            <shortName evidence="1">EPSPS</shortName>
        </alternativeName>
    </domain>
    <domain>
        <recommendedName>
            <fullName evidence="1">Shikimate kinase</fullName>
            <shortName evidence="1">SK</shortName>
            <ecNumber evidence="1">2.7.1.71</ecNumber>
        </recommendedName>
    </domain>
    <domain>
        <recommendedName>
            <fullName evidence="1">3-dehydroquinate dehydratase</fullName>
            <shortName evidence="1">3-dehydroquinase</shortName>
            <ecNumber evidence="1">4.2.1.10</ecNumber>
        </recommendedName>
    </domain>
    <domain>
        <recommendedName>
            <fullName evidence="1">Shikimate dehydrogenase</fullName>
            <ecNumber evidence="1">1.1.1.25</ecNumber>
        </recommendedName>
    </domain>
</protein>
<proteinExistence type="evidence at protein level"/>
<gene>
    <name evidence="1" type="primary">aroM</name>
    <name type="ORF">AFUB_013230</name>
</gene>
<comment type="function">
    <text evidence="1">The AROM polypeptide catalyzes 5 consecutive enzymatic reactions in prechorismate polyaromatic amino acid biosynthesis.</text>
</comment>
<comment type="catalytic activity">
    <reaction evidence="1">
        <text>7-phospho-2-dehydro-3-deoxy-D-arabino-heptonate = 3-dehydroquinate + phosphate</text>
        <dbReference type="Rhea" id="RHEA:21968"/>
        <dbReference type="ChEBI" id="CHEBI:32364"/>
        <dbReference type="ChEBI" id="CHEBI:43474"/>
        <dbReference type="ChEBI" id="CHEBI:58394"/>
        <dbReference type="EC" id="4.2.3.4"/>
    </reaction>
</comment>
<comment type="catalytic activity">
    <reaction evidence="1">
        <text>3-dehydroquinate = 3-dehydroshikimate + H2O</text>
        <dbReference type="Rhea" id="RHEA:21096"/>
        <dbReference type="ChEBI" id="CHEBI:15377"/>
        <dbReference type="ChEBI" id="CHEBI:16630"/>
        <dbReference type="ChEBI" id="CHEBI:32364"/>
        <dbReference type="EC" id="4.2.1.10"/>
    </reaction>
</comment>
<comment type="catalytic activity">
    <reaction evidence="1">
        <text>shikimate + NADP(+) = 3-dehydroshikimate + NADPH + H(+)</text>
        <dbReference type="Rhea" id="RHEA:17737"/>
        <dbReference type="ChEBI" id="CHEBI:15378"/>
        <dbReference type="ChEBI" id="CHEBI:16630"/>
        <dbReference type="ChEBI" id="CHEBI:36208"/>
        <dbReference type="ChEBI" id="CHEBI:57783"/>
        <dbReference type="ChEBI" id="CHEBI:58349"/>
        <dbReference type="EC" id="1.1.1.25"/>
    </reaction>
</comment>
<comment type="catalytic activity">
    <reaction evidence="1">
        <text>shikimate + ATP = 3-phosphoshikimate + ADP + H(+)</text>
        <dbReference type="Rhea" id="RHEA:13121"/>
        <dbReference type="ChEBI" id="CHEBI:15378"/>
        <dbReference type="ChEBI" id="CHEBI:30616"/>
        <dbReference type="ChEBI" id="CHEBI:36208"/>
        <dbReference type="ChEBI" id="CHEBI:145989"/>
        <dbReference type="ChEBI" id="CHEBI:456216"/>
        <dbReference type="EC" id="2.7.1.71"/>
    </reaction>
</comment>
<comment type="catalytic activity">
    <reaction evidence="1">
        <text>3-phosphoshikimate + phosphoenolpyruvate = 5-O-(1-carboxyvinyl)-3-phosphoshikimate + phosphate</text>
        <dbReference type="Rhea" id="RHEA:21256"/>
        <dbReference type="ChEBI" id="CHEBI:43474"/>
        <dbReference type="ChEBI" id="CHEBI:57701"/>
        <dbReference type="ChEBI" id="CHEBI:58702"/>
        <dbReference type="ChEBI" id="CHEBI:145989"/>
        <dbReference type="EC" id="2.5.1.19"/>
    </reaction>
</comment>
<comment type="cofactor">
    <cofactor>
        <name>Zn(2+)</name>
        <dbReference type="ChEBI" id="CHEBI:29105"/>
    </cofactor>
    <text>Binds 2 Zn(2+) ions per subunit.</text>
</comment>
<comment type="pathway">
    <text evidence="1">Metabolic intermediate biosynthesis; chorismate biosynthesis; chorismate from D-erythrose 4-phosphate and phosphoenolpyruvate: step 2/7.</text>
</comment>
<comment type="pathway">
    <text evidence="1">Metabolic intermediate biosynthesis; chorismate biosynthesis; chorismate from D-erythrose 4-phosphate and phosphoenolpyruvate: step 3/7.</text>
</comment>
<comment type="pathway">
    <text evidence="1">Metabolic intermediate biosynthesis; chorismate biosynthesis; chorismate from D-erythrose 4-phosphate and phosphoenolpyruvate: step 4/7.</text>
</comment>
<comment type="pathway">
    <text evidence="1">Metabolic intermediate biosynthesis; chorismate biosynthesis; chorismate from D-erythrose 4-phosphate and phosphoenolpyruvate: step 5/7.</text>
</comment>
<comment type="pathway">
    <text evidence="1">Metabolic intermediate biosynthesis; chorismate biosynthesis; chorismate from D-erythrose 4-phosphate and phosphoenolpyruvate: step 6/7.</text>
</comment>
<comment type="subunit">
    <text evidence="1">Homodimer.</text>
</comment>
<comment type="subcellular location">
    <subcellularLocation>
        <location evidence="1">Cytoplasm</location>
    </subcellularLocation>
</comment>
<comment type="similarity">
    <text evidence="1">In the N-terminal section; belongs to the sugar phosphate cyclases superfamily. Dehydroquinate synthase family.</text>
</comment>
<comment type="similarity">
    <text evidence="1">In the 2nd section; belongs to the EPSP synthase family.</text>
</comment>
<comment type="similarity">
    <text evidence="1">In the 3rd section; belongs to the shikimate kinase family.</text>
</comment>
<comment type="similarity">
    <text evidence="1">In the 4th section; belongs to the type-I 3-dehydroquinase family.</text>
</comment>
<comment type="similarity">
    <text evidence="1">In the C-terminal section; belongs to the shikimate dehydrogenase family.</text>
</comment>
<reference key="1">
    <citation type="journal article" date="2008" name="PLoS Genet.">
        <title>Genomic islands in the pathogenic filamentous fungus Aspergillus fumigatus.</title>
        <authorList>
            <person name="Fedorova N.D."/>
            <person name="Khaldi N."/>
            <person name="Joardar V.S."/>
            <person name="Maiti R."/>
            <person name="Amedeo P."/>
            <person name="Anderson M.J."/>
            <person name="Crabtree J."/>
            <person name="Silva J.C."/>
            <person name="Badger J.H."/>
            <person name="Albarraq A."/>
            <person name="Angiuoli S."/>
            <person name="Bussey H."/>
            <person name="Bowyer P."/>
            <person name="Cotty P.J."/>
            <person name="Dyer P.S."/>
            <person name="Egan A."/>
            <person name="Galens K."/>
            <person name="Fraser-Liggett C.M."/>
            <person name="Haas B.J."/>
            <person name="Inman J.M."/>
            <person name="Kent R."/>
            <person name="Lemieux S."/>
            <person name="Malavazi I."/>
            <person name="Orvis J."/>
            <person name="Roemer T."/>
            <person name="Ronning C.M."/>
            <person name="Sundaram J.P."/>
            <person name="Sutton G."/>
            <person name="Turner G."/>
            <person name="Venter J.C."/>
            <person name="White O.R."/>
            <person name="Whitty B.R."/>
            <person name="Youngman P."/>
            <person name="Wolfe K.H."/>
            <person name="Goldman G.H."/>
            <person name="Wortman J.R."/>
            <person name="Jiang B."/>
            <person name="Denning D.W."/>
            <person name="Nierman W.C."/>
        </authorList>
    </citation>
    <scope>NUCLEOTIDE SEQUENCE [LARGE SCALE GENOMIC DNA]</scope>
    <source>
        <strain>CBS 144.89 / FGSC A1163 / CEA10</strain>
    </source>
</reference>
<evidence type="ECO:0000255" key="1">
    <source>
        <dbReference type="HAMAP-Rule" id="MF_03143"/>
    </source>
</evidence>
<evidence type="ECO:0007829" key="2">
    <source>
        <dbReference type="PDB" id="5SWU"/>
    </source>
</evidence>
<name>ARO1_ASPFC</name>
<sequence>MTGPTKISILGQESIVADFGLWRNYVAKDLISGCPSTTYVLITDTNIGSIYTPGFQKSFEEAAASVSPSPRLLIYNAPPGEVSKSRQTKADIEDWMLSQSPPCGRDTVVIALGGGVIGDLTGFVAATYMRGVRFVQVPTTLLAMVDSSIGGKTAIDTPLGKNLIGAIWQPSRIYIDLEFLETLPVREFINGMAEVIKTAAISSEEEFTALEDNAETILSAVRREVKPGQRRFEGIEEILKARILASARHKAFVVSADEREGGLRNLLNWGHSIGHAIEAILTPQILHGECVAIGMVKEAELARHLGILKGVAVARIVKCIAAYGLPTSLKDSRIRKLTAGKHCSVDQILFNMALDKKNDGPKKKIVLLSAIGRTYEPRASVVPNEDIGVVLAPSIEVHPGVSTTSEVVCAPPGSKSISNRALVLAALGSGTVRIKNLLHSDDTEVMLNALERLGAATFSWEEEGEVLVVNGKGGALQAHPSPLYLGNAGTASRFLTTVATLATASSVDSSVLTGNNRMKQRPIGDLVDALTANGAQIEYVENKGSLPLKIAASGGFTGGQINLAAKVSSQYVSSLLMCAPYAKEPVTLKLVGGKPISQPYIDMTTAMMRSFGIDVKKSTTEEHTYHIPQGRYINPAEYVVESDASSATYPLAIAAVTGTTCTIPNIGSKSLQGDARFAVDVLRPMGCTVEQTDTSTTVTGPADGVLRPLPNVDMEPMTDAFLGASVLAAIARGKDSNHTTRIYGIANQRVKECNRIKAMHDELAKFGVVCREHDDGLEIDGIDRSTLRQPAGGVFCYDDHRVAFSFSVLSLIAPKPTLILEKECVGKTWPGWWDTLRQKFAVKLEGKELKEAESPVLTRAEKASASVFIIGMRGAGKTTSGHWVASTLKRPFIDLDDELERIEGMTIPDIIKQRGWQGFRDAELNLLQRTMKERPTGHVFACGGGVVEIPEARKLLIDWHKTKGNVLLIMRDIKQVMAFLNIDKTRPAYVEDMLGVWLRRKPWFQECSNIQYYSQHASAGLPRASEDFARFIKFVTGLEDSLGTIKKKQHSFFVSLTLPDVRGADQILEQACVGSDAVELRVDLLEDPDSSNGIPTVDFVADQISYLRSRITLPVIFTIRTKGQGGRFPDDAHAEAMQLYRLAVRSGCEFVDLEIAFPDEMLRAVTEMKGYSKIIASHHDPNGELSWANMSWMKYYNRALEYGDVIKLVGVARNLDDNTALRKFKNWAEEAHDVPLIAINMGGNGQLSRILNGFMTPVSHPALPFRAAPGQLSATDIRKGLSLMGEIKKKRFALFGSPISESRSPALHNTLFAEMGLPHEYTRLETANVEDVKDFIRAPDFGGASVTIPLKLDIMPLLDEITAEAEIIGAVNTVVPVSDGEGKPQRLVGHNTDWQGMVQCLRNAGAYGADGSASALVVGGGGTSRAAIYALHQMGFSPIYIVGRNPAKLESMVSTFPTSYNIQIVEGNEKLEHVPHVAIGTIPADRPIDPGMREILCHMFERAQEADADASRTIEGSPRVLLEMAYKPRVTALMQLAVDAGWTTIPGLEALIGQGVHQVGLIDLLQMDITDGVQFQHWTGIRPLYERARVCCDILLSGRTMLTCS</sequence>
<dbReference type="EC" id="4.2.3.4" evidence="1"/>
<dbReference type="EC" id="2.5.1.19" evidence="1"/>
<dbReference type="EC" id="2.7.1.71" evidence="1"/>
<dbReference type="EC" id="4.2.1.10" evidence="1"/>
<dbReference type="EC" id="1.1.1.25" evidence="1"/>
<dbReference type="EMBL" id="DS499594">
    <property type="protein sequence ID" value="EDP56612.1"/>
    <property type="molecule type" value="Genomic_DNA"/>
</dbReference>
<dbReference type="PDB" id="5SWU">
    <property type="method" value="X-ray"/>
    <property type="resolution" value="2.10 A"/>
    <property type="chains" value="A/B=1031-1289"/>
</dbReference>
<dbReference type="PDBsum" id="5SWU"/>
<dbReference type="SMR" id="B0XRM8"/>
<dbReference type="EnsemblFungi" id="EDP56612">
    <property type="protein sequence ID" value="EDP56612"/>
    <property type="gene ID" value="AFUB_013230"/>
</dbReference>
<dbReference type="HOGENOM" id="CLU_001201_1_2_1"/>
<dbReference type="OrthoDB" id="86857at5052"/>
<dbReference type="PhylomeDB" id="B0XRM8"/>
<dbReference type="UniPathway" id="UPA00053">
    <property type="reaction ID" value="UER00085"/>
</dbReference>
<dbReference type="UniPathway" id="UPA00053">
    <property type="reaction ID" value="UER00086"/>
</dbReference>
<dbReference type="UniPathway" id="UPA00053">
    <property type="reaction ID" value="UER00087"/>
</dbReference>
<dbReference type="UniPathway" id="UPA00053">
    <property type="reaction ID" value="UER00088"/>
</dbReference>
<dbReference type="UniPathway" id="UPA00053">
    <property type="reaction ID" value="UER00089"/>
</dbReference>
<dbReference type="Proteomes" id="UP000001699">
    <property type="component" value="Unassembled WGS sequence"/>
</dbReference>
<dbReference type="GO" id="GO:0005737">
    <property type="term" value="C:cytoplasm"/>
    <property type="evidence" value="ECO:0007669"/>
    <property type="project" value="UniProtKB-SubCell"/>
</dbReference>
<dbReference type="GO" id="GO:0003855">
    <property type="term" value="F:3-dehydroquinate dehydratase activity"/>
    <property type="evidence" value="ECO:0007669"/>
    <property type="project" value="UniProtKB-UniRule"/>
</dbReference>
<dbReference type="GO" id="GO:0003856">
    <property type="term" value="F:3-dehydroquinate synthase activity"/>
    <property type="evidence" value="ECO:0007669"/>
    <property type="project" value="UniProtKB-UniRule"/>
</dbReference>
<dbReference type="GO" id="GO:0003866">
    <property type="term" value="F:3-phosphoshikimate 1-carboxyvinyltransferase activity"/>
    <property type="evidence" value="ECO:0007669"/>
    <property type="project" value="UniProtKB-UniRule"/>
</dbReference>
<dbReference type="GO" id="GO:0005524">
    <property type="term" value="F:ATP binding"/>
    <property type="evidence" value="ECO:0007669"/>
    <property type="project" value="UniProtKB-UniRule"/>
</dbReference>
<dbReference type="GO" id="GO:0046872">
    <property type="term" value="F:metal ion binding"/>
    <property type="evidence" value="ECO:0007669"/>
    <property type="project" value="UniProtKB-UniRule"/>
</dbReference>
<dbReference type="GO" id="GO:0004764">
    <property type="term" value="F:shikimate 3-dehydrogenase (NADP+) activity"/>
    <property type="evidence" value="ECO:0007669"/>
    <property type="project" value="UniProtKB-UniRule"/>
</dbReference>
<dbReference type="GO" id="GO:0004765">
    <property type="term" value="F:shikimate kinase activity"/>
    <property type="evidence" value="ECO:0007669"/>
    <property type="project" value="UniProtKB-UniRule"/>
</dbReference>
<dbReference type="GO" id="GO:0008652">
    <property type="term" value="P:amino acid biosynthetic process"/>
    <property type="evidence" value="ECO:0007669"/>
    <property type="project" value="UniProtKB-KW"/>
</dbReference>
<dbReference type="GO" id="GO:0009073">
    <property type="term" value="P:aromatic amino acid family biosynthetic process"/>
    <property type="evidence" value="ECO:0007669"/>
    <property type="project" value="UniProtKB-UniRule"/>
</dbReference>
<dbReference type="GO" id="GO:0009423">
    <property type="term" value="P:chorismate biosynthetic process"/>
    <property type="evidence" value="ECO:0007669"/>
    <property type="project" value="UniProtKB-UniRule"/>
</dbReference>
<dbReference type="CDD" id="cd00502">
    <property type="entry name" value="DHQase_I"/>
    <property type="match status" value="1"/>
</dbReference>
<dbReference type="CDD" id="cd08195">
    <property type="entry name" value="DHQS"/>
    <property type="match status" value="1"/>
</dbReference>
<dbReference type="CDD" id="cd01556">
    <property type="entry name" value="EPSP_synthase"/>
    <property type="match status" value="1"/>
</dbReference>
<dbReference type="CDD" id="cd01065">
    <property type="entry name" value="NAD_bind_Shikimate_DH"/>
    <property type="match status" value="1"/>
</dbReference>
<dbReference type="CDD" id="cd00464">
    <property type="entry name" value="SK"/>
    <property type="match status" value="1"/>
</dbReference>
<dbReference type="FunFam" id="1.20.1090.10:FF:000007">
    <property type="entry name" value="Pentafunctional AROM polypeptide"/>
    <property type="match status" value="1"/>
</dbReference>
<dbReference type="FunFam" id="3.20.20.70:FF:000135">
    <property type="entry name" value="Pentafunctional AROM polypeptide"/>
    <property type="match status" value="1"/>
</dbReference>
<dbReference type="FunFam" id="3.40.50.10860:FF:000015">
    <property type="entry name" value="Pentafunctional AROM polypeptide"/>
    <property type="match status" value="1"/>
</dbReference>
<dbReference type="FunFam" id="3.40.50.1970:FF:000007">
    <property type="entry name" value="Pentafunctional AROM polypeptide"/>
    <property type="match status" value="1"/>
</dbReference>
<dbReference type="FunFam" id="3.40.50.300:FF:001256">
    <property type="entry name" value="Pentafunctional AROM polypeptide"/>
    <property type="match status" value="1"/>
</dbReference>
<dbReference type="FunFam" id="3.40.50.720:FF:000483">
    <property type="entry name" value="Pentafunctional AROM polypeptide"/>
    <property type="match status" value="1"/>
</dbReference>
<dbReference type="FunFam" id="3.65.10.10:FF:000007">
    <property type="entry name" value="Pentafunctional AROM polypeptide"/>
    <property type="match status" value="1"/>
</dbReference>
<dbReference type="FunFam" id="3.65.10.10:FF:000008">
    <property type="entry name" value="Pentafunctional AROM polypeptide"/>
    <property type="match status" value="1"/>
</dbReference>
<dbReference type="Gene3D" id="3.40.50.1970">
    <property type="match status" value="1"/>
</dbReference>
<dbReference type="Gene3D" id="3.20.20.70">
    <property type="entry name" value="Aldolase class I"/>
    <property type="match status" value="1"/>
</dbReference>
<dbReference type="Gene3D" id="1.20.1090.10">
    <property type="entry name" value="Dehydroquinate synthase-like - alpha domain"/>
    <property type="match status" value="1"/>
</dbReference>
<dbReference type="Gene3D" id="3.65.10.10">
    <property type="entry name" value="Enolpyruvate transferase domain"/>
    <property type="match status" value="2"/>
</dbReference>
<dbReference type="Gene3D" id="3.40.50.10860">
    <property type="entry name" value="Leucine Dehydrogenase, chain A, domain 1"/>
    <property type="match status" value="1"/>
</dbReference>
<dbReference type="Gene3D" id="3.40.50.720">
    <property type="entry name" value="NAD(P)-binding Rossmann-like Domain"/>
    <property type="match status" value="1"/>
</dbReference>
<dbReference type="Gene3D" id="3.40.50.300">
    <property type="entry name" value="P-loop containing nucleotide triphosphate hydrolases"/>
    <property type="match status" value="1"/>
</dbReference>
<dbReference type="HAMAP" id="MF_00210">
    <property type="entry name" value="EPSP_synth"/>
    <property type="match status" value="1"/>
</dbReference>
<dbReference type="HAMAP" id="MF_03143">
    <property type="entry name" value="Pentafunct_AroM"/>
    <property type="match status" value="1"/>
</dbReference>
<dbReference type="HAMAP" id="MF_00109">
    <property type="entry name" value="Shikimate_kinase"/>
    <property type="match status" value="1"/>
</dbReference>
<dbReference type="InterPro" id="IPR018508">
    <property type="entry name" value="3-dehydroquinate_DH_AS"/>
</dbReference>
<dbReference type="InterPro" id="IPR013785">
    <property type="entry name" value="Aldolase_TIM"/>
</dbReference>
<dbReference type="InterPro" id="IPR046346">
    <property type="entry name" value="Aminoacid_DH-like_N_sf"/>
</dbReference>
<dbReference type="InterPro" id="IPR016037">
    <property type="entry name" value="DHQ_synth_AroB"/>
</dbReference>
<dbReference type="InterPro" id="IPR030960">
    <property type="entry name" value="DHQS/DOIS_N"/>
</dbReference>
<dbReference type="InterPro" id="IPR056179">
    <property type="entry name" value="DHQS_C"/>
</dbReference>
<dbReference type="InterPro" id="IPR001381">
    <property type="entry name" value="DHquinase_I"/>
</dbReference>
<dbReference type="InterPro" id="IPR001986">
    <property type="entry name" value="Enolpyruvate_Tfrase_dom"/>
</dbReference>
<dbReference type="InterPro" id="IPR036968">
    <property type="entry name" value="Enolpyruvate_Tfrase_sf"/>
</dbReference>
<dbReference type="InterPro" id="IPR006264">
    <property type="entry name" value="EPSP_synthase"/>
</dbReference>
<dbReference type="InterPro" id="IPR023193">
    <property type="entry name" value="EPSP_synthase_CS"/>
</dbReference>
<dbReference type="InterPro" id="IPR036291">
    <property type="entry name" value="NAD(P)-bd_dom_sf"/>
</dbReference>
<dbReference type="InterPro" id="IPR027417">
    <property type="entry name" value="P-loop_NTPase"/>
</dbReference>
<dbReference type="InterPro" id="IPR008289">
    <property type="entry name" value="Pentafunct_AroM"/>
</dbReference>
<dbReference type="InterPro" id="IPR013792">
    <property type="entry name" value="RNA3'P_cycl/enolpyr_Trfase_a/b"/>
</dbReference>
<dbReference type="InterPro" id="IPR031322">
    <property type="entry name" value="Shikimate/glucono_kinase"/>
</dbReference>
<dbReference type="InterPro" id="IPR013708">
    <property type="entry name" value="Shikimate_DH-bd_N"/>
</dbReference>
<dbReference type="InterPro" id="IPR010110">
    <property type="entry name" value="Shikimate_DH_AroM-type"/>
</dbReference>
<dbReference type="InterPro" id="IPR000623">
    <property type="entry name" value="Shikimate_kinase/TSH1"/>
</dbReference>
<dbReference type="InterPro" id="IPR023000">
    <property type="entry name" value="Shikimate_kinase_CS"/>
</dbReference>
<dbReference type="NCBIfam" id="TIGR01356">
    <property type="entry name" value="aroA"/>
    <property type="match status" value="1"/>
</dbReference>
<dbReference type="NCBIfam" id="TIGR01357">
    <property type="entry name" value="aroB"/>
    <property type="match status" value="1"/>
</dbReference>
<dbReference type="NCBIfam" id="TIGR01093">
    <property type="entry name" value="aroD"/>
    <property type="match status" value="1"/>
</dbReference>
<dbReference type="NCBIfam" id="TIGR01809">
    <property type="entry name" value="Shik-DH-AROM"/>
    <property type="match status" value="1"/>
</dbReference>
<dbReference type="PANTHER" id="PTHR21090">
    <property type="entry name" value="AROM/DEHYDROQUINATE SYNTHASE"/>
    <property type="match status" value="1"/>
</dbReference>
<dbReference type="PANTHER" id="PTHR21090:SF5">
    <property type="entry name" value="PENTAFUNCTIONAL AROM POLYPEPTIDE"/>
    <property type="match status" value="1"/>
</dbReference>
<dbReference type="Pfam" id="PF01761">
    <property type="entry name" value="DHQ_synthase"/>
    <property type="match status" value="1"/>
</dbReference>
<dbReference type="Pfam" id="PF24621">
    <property type="entry name" value="DHQS_C"/>
    <property type="match status" value="1"/>
</dbReference>
<dbReference type="Pfam" id="PF01487">
    <property type="entry name" value="DHquinase_I"/>
    <property type="match status" value="1"/>
</dbReference>
<dbReference type="Pfam" id="PF00275">
    <property type="entry name" value="EPSP_synthase"/>
    <property type="match status" value="1"/>
</dbReference>
<dbReference type="Pfam" id="PF08501">
    <property type="entry name" value="Shikimate_dh_N"/>
    <property type="match status" value="1"/>
</dbReference>
<dbReference type="Pfam" id="PF01202">
    <property type="entry name" value="SKI"/>
    <property type="match status" value="1"/>
</dbReference>
<dbReference type="PIRSF" id="PIRSF000514">
    <property type="entry name" value="Pentafunct_AroM"/>
    <property type="match status" value="1"/>
</dbReference>
<dbReference type="PRINTS" id="PR01100">
    <property type="entry name" value="SHIKIMTKNASE"/>
</dbReference>
<dbReference type="SUPFAM" id="SSF51569">
    <property type="entry name" value="Aldolase"/>
    <property type="match status" value="1"/>
</dbReference>
<dbReference type="SUPFAM" id="SSF53223">
    <property type="entry name" value="Aminoacid dehydrogenase-like, N-terminal domain"/>
    <property type="match status" value="1"/>
</dbReference>
<dbReference type="SUPFAM" id="SSF56796">
    <property type="entry name" value="Dehydroquinate synthase-like"/>
    <property type="match status" value="1"/>
</dbReference>
<dbReference type="SUPFAM" id="SSF55205">
    <property type="entry name" value="EPT/RTPC-like"/>
    <property type="match status" value="1"/>
</dbReference>
<dbReference type="SUPFAM" id="SSF51735">
    <property type="entry name" value="NAD(P)-binding Rossmann-fold domains"/>
    <property type="match status" value="1"/>
</dbReference>
<dbReference type="SUPFAM" id="SSF52540">
    <property type="entry name" value="P-loop containing nucleoside triphosphate hydrolases"/>
    <property type="match status" value="1"/>
</dbReference>
<dbReference type="PROSITE" id="PS01028">
    <property type="entry name" value="DEHYDROQUINASE_I"/>
    <property type="match status" value="1"/>
</dbReference>
<dbReference type="PROSITE" id="PS00104">
    <property type="entry name" value="EPSP_SYNTHASE_1"/>
    <property type="match status" value="1"/>
</dbReference>
<dbReference type="PROSITE" id="PS00885">
    <property type="entry name" value="EPSP_SYNTHASE_2"/>
    <property type="match status" value="1"/>
</dbReference>
<dbReference type="PROSITE" id="PS01128">
    <property type="entry name" value="SHIKIMATE_KINASE"/>
    <property type="match status" value="1"/>
</dbReference>
<keyword id="KW-0002">3D-structure</keyword>
<keyword id="KW-0028">Amino-acid biosynthesis</keyword>
<keyword id="KW-0057">Aromatic amino acid biosynthesis</keyword>
<keyword id="KW-0067">ATP-binding</keyword>
<keyword id="KW-0963">Cytoplasm</keyword>
<keyword id="KW-0418">Kinase</keyword>
<keyword id="KW-0456">Lyase</keyword>
<keyword id="KW-0479">Metal-binding</keyword>
<keyword id="KW-0511">Multifunctional enzyme</keyword>
<keyword id="KW-0521">NADP</keyword>
<keyword id="KW-0547">Nucleotide-binding</keyword>
<keyword id="KW-0560">Oxidoreductase</keyword>
<keyword id="KW-0808">Transferase</keyword>
<keyword id="KW-0862">Zinc</keyword>
<organism>
    <name type="scientific">Aspergillus fumigatus (strain CBS 144.89 / FGSC A1163 / CEA10)</name>
    <name type="common">Neosartorya fumigata</name>
    <dbReference type="NCBI Taxonomy" id="451804"/>
    <lineage>
        <taxon>Eukaryota</taxon>
        <taxon>Fungi</taxon>
        <taxon>Dikarya</taxon>
        <taxon>Ascomycota</taxon>
        <taxon>Pezizomycotina</taxon>
        <taxon>Eurotiomycetes</taxon>
        <taxon>Eurotiomycetidae</taxon>
        <taxon>Eurotiales</taxon>
        <taxon>Aspergillaceae</taxon>
        <taxon>Aspergillus</taxon>
        <taxon>Aspergillus subgen. Fumigati</taxon>
    </lineage>
</organism>
<accession>B0XRM8</accession>
<feature type="chain" id="PRO_0000406704" description="Pentafunctional AROM polypeptide">
    <location>
        <begin position="1"/>
        <end position="1605"/>
    </location>
</feature>
<feature type="region of interest" description="3-dehydroquinate synthase">
    <location>
        <begin position="1"/>
        <end position="384"/>
    </location>
</feature>
<feature type="region of interest" description="EPSP synthase">
    <location>
        <begin position="397"/>
        <end position="842"/>
    </location>
</feature>
<feature type="region of interest" description="Shikimate kinase">
    <location>
        <begin position="864"/>
        <end position="1055"/>
    </location>
</feature>
<feature type="region of interest" description="3-dehydroquinase">
    <location>
        <begin position="1056"/>
        <end position="1276"/>
    </location>
</feature>
<feature type="region of interest" description="Shikimate dehydrogenase">
    <location>
        <begin position="1289"/>
        <end position="1605"/>
    </location>
</feature>
<feature type="active site" description="Proton acceptor; for 3-dehydroquinate synthase activity" evidence="1">
    <location>
        <position position="260"/>
    </location>
</feature>
<feature type="active site" description="Proton acceptor; for 3-dehydroquinate synthase activity" evidence="1">
    <location>
        <position position="275"/>
    </location>
</feature>
<feature type="active site" description="For EPSP synthase activity" evidence="1">
    <location>
        <position position="824"/>
    </location>
</feature>
<feature type="active site" description="Proton acceptor; for 3-dehydroquinate dehydratase activity" evidence="1">
    <location>
        <position position="1179"/>
    </location>
</feature>
<feature type="active site" description="Schiff-base intermediate with substrate; for 3-dehydroquinate dehydratase activity" evidence="1">
    <location>
        <position position="1207"/>
    </location>
</feature>
<feature type="binding site" evidence="1">
    <location>
        <begin position="44"/>
        <end position="46"/>
    </location>
    <ligand>
        <name>NAD(+)</name>
        <dbReference type="ChEBI" id="CHEBI:57540"/>
    </ligand>
</feature>
<feature type="binding site" evidence="1">
    <location>
        <begin position="81"/>
        <end position="84"/>
    </location>
    <ligand>
        <name>NAD(+)</name>
        <dbReference type="ChEBI" id="CHEBI:57540"/>
    </ligand>
</feature>
<feature type="binding site" evidence="1">
    <location>
        <begin position="114"/>
        <end position="116"/>
    </location>
    <ligand>
        <name>NAD(+)</name>
        <dbReference type="ChEBI" id="CHEBI:57540"/>
    </ligand>
</feature>
<feature type="binding site" evidence="1">
    <location>
        <position position="119"/>
    </location>
    <ligand>
        <name>NAD(+)</name>
        <dbReference type="ChEBI" id="CHEBI:57540"/>
    </ligand>
</feature>
<feature type="binding site" evidence="1">
    <location>
        <position position="130"/>
    </location>
    <ligand>
        <name>7-phospho-2-dehydro-3-deoxy-D-arabino-heptonate</name>
        <dbReference type="ChEBI" id="CHEBI:58394"/>
    </ligand>
</feature>
<feature type="binding site" evidence="1">
    <location>
        <begin position="139"/>
        <end position="140"/>
    </location>
    <ligand>
        <name>NAD(+)</name>
        <dbReference type="ChEBI" id="CHEBI:57540"/>
    </ligand>
</feature>
<feature type="binding site" evidence="1">
    <location>
        <position position="146"/>
    </location>
    <ligand>
        <name>7-phospho-2-dehydro-3-deoxy-D-arabino-heptonate</name>
        <dbReference type="ChEBI" id="CHEBI:58394"/>
    </ligand>
</feature>
<feature type="binding site" evidence="1">
    <location>
        <position position="152"/>
    </location>
    <ligand>
        <name>7-phospho-2-dehydro-3-deoxy-D-arabino-heptonate</name>
        <dbReference type="ChEBI" id="CHEBI:58394"/>
    </ligand>
</feature>
<feature type="binding site" evidence="1">
    <location>
        <position position="161"/>
    </location>
    <ligand>
        <name>NAD(+)</name>
        <dbReference type="ChEBI" id="CHEBI:57540"/>
    </ligand>
</feature>
<feature type="binding site" evidence="1">
    <location>
        <position position="162"/>
    </location>
    <ligand>
        <name>7-phospho-2-dehydro-3-deoxy-D-arabino-heptonate</name>
        <dbReference type="ChEBI" id="CHEBI:58394"/>
    </ligand>
</feature>
<feature type="binding site" evidence="1">
    <location>
        <begin position="179"/>
        <end position="182"/>
    </location>
    <ligand>
        <name>NAD(+)</name>
        <dbReference type="ChEBI" id="CHEBI:57540"/>
    </ligand>
</feature>
<feature type="binding site" evidence="1">
    <location>
        <position position="190"/>
    </location>
    <ligand>
        <name>NAD(+)</name>
        <dbReference type="ChEBI" id="CHEBI:57540"/>
    </ligand>
</feature>
<feature type="binding site" evidence="1">
    <location>
        <begin position="194"/>
        <end position="197"/>
    </location>
    <ligand>
        <name>7-phospho-2-dehydro-3-deoxy-D-arabino-heptonate</name>
        <dbReference type="ChEBI" id="CHEBI:58394"/>
    </ligand>
</feature>
<feature type="binding site" evidence="1">
    <location>
        <position position="194"/>
    </location>
    <ligand>
        <name>Zn(2+)</name>
        <dbReference type="ChEBI" id="CHEBI:29105"/>
        <note>catalytic</note>
    </ligand>
</feature>
<feature type="binding site" evidence="1">
    <location>
        <position position="250"/>
    </location>
    <ligand>
        <name>7-phospho-2-dehydro-3-deoxy-D-arabino-heptonate</name>
        <dbReference type="ChEBI" id="CHEBI:58394"/>
    </ligand>
</feature>
<feature type="binding site" evidence="1">
    <location>
        <begin position="264"/>
        <end position="268"/>
    </location>
    <ligand>
        <name>7-phospho-2-dehydro-3-deoxy-D-arabino-heptonate</name>
        <dbReference type="ChEBI" id="CHEBI:58394"/>
    </ligand>
</feature>
<feature type="binding site" evidence="1">
    <location>
        <position position="271"/>
    </location>
    <ligand>
        <name>7-phospho-2-dehydro-3-deoxy-D-arabino-heptonate</name>
        <dbReference type="ChEBI" id="CHEBI:58394"/>
    </ligand>
</feature>
<feature type="binding site" evidence="1">
    <location>
        <position position="271"/>
    </location>
    <ligand>
        <name>Zn(2+)</name>
        <dbReference type="ChEBI" id="CHEBI:29105"/>
        <note>catalytic</note>
    </ligand>
</feature>
<feature type="binding site" evidence="1">
    <location>
        <position position="287"/>
    </location>
    <ligand>
        <name>7-phospho-2-dehydro-3-deoxy-D-arabino-heptonate</name>
        <dbReference type="ChEBI" id="CHEBI:58394"/>
    </ligand>
</feature>
<feature type="binding site" evidence="1">
    <location>
        <position position="287"/>
    </location>
    <ligand>
        <name>Zn(2+)</name>
        <dbReference type="ChEBI" id="CHEBI:29105"/>
        <note>catalytic</note>
    </ligand>
</feature>
<feature type="binding site" evidence="1">
    <location>
        <position position="356"/>
    </location>
    <ligand>
        <name>7-phospho-2-dehydro-3-deoxy-D-arabino-heptonate</name>
        <dbReference type="ChEBI" id="CHEBI:58394"/>
    </ligand>
</feature>
<feature type="binding site" evidence="1">
    <location>
        <begin position="871"/>
        <end position="878"/>
    </location>
    <ligand>
        <name>ATP</name>
        <dbReference type="ChEBI" id="CHEBI:30616"/>
    </ligand>
</feature>
<feature type="helix" evidence="2">
    <location>
        <begin position="1041"/>
        <end position="1046"/>
    </location>
</feature>
<feature type="strand" evidence="2">
    <location>
        <begin position="1048"/>
        <end position="1050"/>
    </location>
</feature>
<feature type="strand" evidence="2">
    <location>
        <begin position="1052"/>
        <end position="1056"/>
    </location>
</feature>
<feature type="helix" evidence="2">
    <location>
        <begin position="1065"/>
        <end position="1071"/>
    </location>
</feature>
<feature type="turn" evidence="2">
    <location>
        <begin position="1072"/>
        <end position="1074"/>
    </location>
</feature>
<feature type="strand" evidence="2">
    <location>
        <begin position="1076"/>
        <end position="1081"/>
    </location>
</feature>
<feature type="helix" evidence="2">
    <location>
        <begin position="1082"/>
        <end position="1084"/>
    </location>
</feature>
<feature type="strand" evidence="2">
    <location>
        <begin position="1091"/>
        <end position="1094"/>
    </location>
</feature>
<feature type="helix" evidence="2">
    <location>
        <begin position="1097"/>
        <end position="1110"/>
    </location>
</feature>
<feature type="strand" evidence="2">
    <location>
        <begin position="1115"/>
        <end position="1118"/>
    </location>
</feature>
<feature type="helix" evidence="2">
    <location>
        <begin position="1122"/>
        <end position="1124"/>
    </location>
</feature>
<feature type="strand" evidence="2">
    <location>
        <begin position="1126"/>
        <end position="1128"/>
    </location>
</feature>
<feature type="helix" evidence="2">
    <location>
        <begin position="1133"/>
        <end position="1145"/>
    </location>
</feature>
<feature type="strand" evidence="2">
    <location>
        <begin position="1149"/>
        <end position="1154"/>
    </location>
</feature>
<feature type="helix" evidence="2">
    <location>
        <begin position="1159"/>
        <end position="1167"/>
    </location>
</feature>
<feature type="strand" evidence="2">
    <location>
        <begin position="1173"/>
        <end position="1179"/>
    </location>
</feature>
<feature type="helix" evidence="2">
    <location>
        <begin position="1193"/>
        <end position="1202"/>
    </location>
</feature>
<feature type="strand" evidence="2">
    <location>
        <begin position="1204"/>
        <end position="1211"/>
    </location>
</feature>
<feature type="helix" evidence="2">
    <location>
        <begin position="1216"/>
        <end position="1231"/>
    </location>
</feature>
<feature type="strand" evidence="2">
    <location>
        <begin position="1236"/>
        <end position="1242"/>
    </location>
</feature>
<feature type="helix" evidence="2">
    <location>
        <begin position="1246"/>
        <end position="1252"/>
    </location>
</feature>
<feature type="strand" evidence="2">
    <location>
        <begin position="1254"/>
        <end position="1259"/>
    </location>
</feature>
<feature type="strand" evidence="2">
    <location>
        <begin position="1263"/>
        <end position="1265"/>
    </location>
</feature>
<feature type="helix" evidence="2">
    <location>
        <begin position="1274"/>
        <end position="1283"/>
    </location>
</feature>